<gene>
    <name evidence="1" type="primary">rplL</name>
    <name type="ordered locus">DSY0458</name>
</gene>
<keyword id="KW-1185">Reference proteome</keyword>
<keyword id="KW-0687">Ribonucleoprotein</keyword>
<keyword id="KW-0689">Ribosomal protein</keyword>
<comment type="function">
    <text evidence="1">Forms part of the ribosomal stalk which helps the ribosome interact with GTP-bound translation factors. Is thus essential for accurate translation.</text>
</comment>
<comment type="subunit">
    <text evidence="1">Homodimer. Part of the ribosomal stalk of the 50S ribosomal subunit. Forms a multimeric L10(L12)X complex, where L10 forms an elongated spine to which 2 to 4 L12 dimers bind in a sequential fashion. Binds GTP-bound translation factors.</text>
</comment>
<comment type="similarity">
    <text evidence="1">Belongs to the bacterial ribosomal protein bL12 family.</text>
</comment>
<reference key="1">
    <citation type="journal article" date="2006" name="J. Bacteriol.">
        <title>Complete genome sequence of the dehalorespiring bacterium Desulfitobacterium hafniense Y51 and comparison with Dehalococcoides ethenogenes 195.</title>
        <authorList>
            <person name="Nonaka H."/>
            <person name="Keresztes G."/>
            <person name="Shinoda Y."/>
            <person name="Ikenaga Y."/>
            <person name="Abe M."/>
            <person name="Naito K."/>
            <person name="Inatomi K."/>
            <person name="Furukawa K."/>
            <person name="Inui M."/>
            <person name="Yukawa H."/>
        </authorList>
    </citation>
    <scope>NUCLEOTIDE SEQUENCE [LARGE SCALE GENOMIC DNA]</scope>
    <source>
        <strain>Y51</strain>
    </source>
</reference>
<proteinExistence type="inferred from homology"/>
<name>RL7_DESHY</name>
<sequence>MSKTAEILEAVKGLTVLELAELVKAFEEEFGVSAAAPVAVAAAPGAAAAPVAEEQTEFDVVLMNAGAGKINVIKVVREITGLGLKEAKELVDGAPKPVKEKVSKDDAEAIKAKLVEAGATVEVK</sequence>
<accession>Q250P5</accession>
<protein>
    <recommendedName>
        <fullName evidence="1">Large ribosomal subunit protein bL12</fullName>
    </recommendedName>
    <alternativeName>
        <fullName evidence="2">50S ribosomal protein L7/L12</fullName>
    </alternativeName>
</protein>
<feature type="chain" id="PRO_1000006998" description="Large ribosomal subunit protein bL12">
    <location>
        <begin position="1"/>
        <end position="124"/>
    </location>
</feature>
<organism>
    <name type="scientific">Desulfitobacterium hafniense (strain Y51)</name>
    <dbReference type="NCBI Taxonomy" id="138119"/>
    <lineage>
        <taxon>Bacteria</taxon>
        <taxon>Bacillati</taxon>
        <taxon>Bacillota</taxon>
        <taxon>Clostridia</taxon>
        <taxon>Eubacteriales</taxon>
        <taxon>Desulfitobacteriaceae</taxon>
        <taxon>Desulfitobacterium</taxon>
    </lineage>
</organism>
<evidence type="ECO:0000255" key="1">
    <source>
        <dbReference type="HAMAP-Rule" id="MF_00368"/>
    </source>
</evidence>
<evidence type="ECO:0000305" key="2"/>
<dbReference type="EMBL" id="AP008230">
    <property type="protein sequence ID" value="BAE82247.1"/>
    <property type="molecule type" value="Genomic_DNA"/>
</dbReference>
<dbReference type="RefSeq" id="WP_011459089.1">
    <property type="nucleotide sequence ID" value="NC_007907.1"/>
</dbReference>
<dbReference type="SMR" id="Q250P5"/>
<dbReference type="STRING" id="138119.DSY0458"/>
<dbReference type="KEGG" id="dsy:DSY0458"/>
<dbReference type="eggNOG" id="COG0222">
    <property type="taxonomic scope" value="Bacteria"/>
</dbReference>
<dbReference type="HOGENOM" id="CLU_086499_3_2_9"/>
<dbReference type="Proteomes" id="UP000001946">
    <property type="component" value="Chromosome"/>
</dbReference>
<dbReference type="GO" id="GO:0022625">
    <property type="term" value="C:cytosolic large ribosomal subunit"/>
    <property type="evidence" value="ECO:0007669"/>
    <property type="project" value="TreeGrafter"/>
</dbReference>
<dbReference type="GO" id="GO:0003729">
    <property type="term" value="F:mRNA binding"/>
    <property type="evidence" value="ECO:0007669"/>
    <property type="project" value="TreeGrafter"/>
</dbReference>
<dbReference type="GO" id="GO:0003735">
    <property type="term" value="F:structural constituent of ribosome"/>
    <property type="evidence" value="ECO:0007669"/>
    <property type="project" value="InterPro"/>
</dbReference>
<dbReference type="GO" id="GO:0006412">
    <property type="term" value="P:translation"/>
    <property type="evidence" value="ECO:0007669"/>
    <property type="project" value="UniProtKB-UniRule"/>
</dbReference>
<dbReference type="CDD" id="cd00387">
    <property type="entry name" value="Ribosomal_L7_L12"/>
    <property type="match status" value="1"/>
</dbReference>
<dbReference type="FunFam" id="3.30.1390.10:FF:000001">
    <property type="entry name" value="50S ribosomal protein L7/L12"/>
    <property type="match status" value="1"/>
</dbReference>
<dbReference type="Gene3D" id="3.30.1390.10">
    <property type="match status" value="1"/>
</dbReference>
<dbReference type="Gene3D" id="1.20.5.710">
    <property type="entry name" value="Single helix bin"/>
    <property type="match status" value="1"/>
</dbReference>
<dbReference type="HAMAP" id="MF_00368">
    <property type="entry name" value="Ribosomal_bL12"/>
    <property type="match status" value="1"/>
</dbReference>
<dbReference type="InterPro" id="IPR000206">
    <property type="entry name" value="Ribosomal_bL12"/>
</dbReference>
<dbReference type="InterPro" id="IPR013823">
    <property type="entry name" value="Ribosomal_bL12_C"/>
</dbReference>
<dbReference type="InterPro" id="IPR014719">
    <property type="entry name" value="Ribosomal_bL12_C/ClpS-like"/>
</dbReference>
<dbReference type="InterPro" id="IPR008932">
    <property type="entry name" value="Ribosomal_bL12_oligo"/>
</dbReference>
<dbReference type="InterPro" id="IPR036235">
    <property type="entry name" value="Ribosomal_bL12_oligo_N_sf"/>
</dbReference>
<dbReference type="NCBIfam" id="TIGR00855">
    <property type="entry name" value="L12"/>
    <property type="match status" value="1"/>
</dbReference>
<dbReference type="PANTHER" id="PTHR45987">
    <property type="entry name" value="39S RIBOSOMAL PROTEIN L12"/>
    <property type="match status" value="1"/>
</dbReference>
<dbReference type="PANTHER" id="PTHR45987:SF4">
    <property type="entry name" value="LARGE RIBOSOMAL SUBUNIT PROTEIN BL12M"/>
    <property type="match status" value="1"/>
</dbReference>
<dbReference type="Pfam" id="PF00542">
    <property type="entry name" value="Ribosomal_L12"/>
    <property type="match status" value="1"/>
</dbReference>
<dbReference type="Pfam" id="PF16320">
    <property type="entry name" value="Ribosomal_L12_N"/>
    <property type="match status" value="1"/>
</dbReference>
<dbReference type="SUPFAM" id="SSF54736">
    <property type="entry name" value="ClpS-like"/>
    <property type="match status" value="1"/>
</dbReference>
<dbReference type="SUPFAM" id="SSF48300">
    <property type="entry name" value="Ribosomal protein L7/12, oligomerisation (N-terminal) domain"/>
    <property type="match status" value="1"/>
</dbReference>